<dbReference type="EMBL" id="AL138646">
    <property type="protein sequence ID" value="CAB81821.1"/>
    <property type="molecule type" value="Genomic_DNA"/>
</dbReference>
<dbReference type="EMBL" id="CP002686">
    <property type="protein sequence ID" value="AEE80050.1"/>
    <property type="molecule type" value="Genomic_DNA"/>
</dbReference>
<dbReference type="EMBL" id="CP002686">
    <property type="protein sequence ID" value="ANM65277.1"/>
    <property type="molecule type" value="Genomic_DNA"/>
</dbReference>
<dbReference type="PIR" id="T47846">
    <property type="entry name" value="T47846"/>
</dbReference>
<dbReference type="SMR" id="Q9M224"/>
<dbReference type="FunCoup" id="Q9M224">
    <property type="interactions" value="777"/>
</dbReference>
<dbReference type="STRING" id="3702.Q9M224"/>
<dbReference type="iPTMnet" id="Q9M224"/>
<dbReference type="PaxDb" id="3702-AT3G60350.1"/>
<dbReference type="EnsemblPlants" id="AT3G60350.1">
    <property type="protein sequence ID" value="AT3G60350.1"/>
    <property type="gene ID" value="AT3G60350"/>
</dbReference>
<dbReference type="EnsemblPlants" id="AT3G60350.2">
    <property type="protein sequence ID" value="AT3G60350.2"/>
    <property type="gene ID" value="AT3G60350"/>
</dbReference>
<dbReference type="Gramene" id="AT3G60350.1">
    <property type="protein sequence ID" value="AT3G60350.1"/>
    <property type="gene ID" value="AT3G60350"/>
</dbReference>
<dbReference type="Gramene" id="AT3G60350.2">
    <property type="protein sequence ID" value="AT3G60350.2"/>
    <property type="gene ID" value="AT3G60350"/>
</dbReference>
<dbReference type="KEGG" id="ath:AT3G60350"/>
<dbReference type="Araport" id="AT3G60350"/>
<dbReference type="TAIR" id="AT3G60350">
    <property type="gene designation" value="ARABIDILLO-2"/>
</dbReference>
<dbReference type="eggNOG" id="ENOG502QRCG">
    <property type="taxonomic scope" value="Eukaryota"/>
</dbReference>
<dbReference type="HOGENOM" id="CLU_018807_0_0_1"/>
<dbReference type="InParanoid" id="Q9M224"/>
<dbReference type="OMA" id="TRCANLH"/>
<dbReference type="PhylomeDB" id="Q9M224"/>
<dbReference type="PRO" id="PR:Q9M224"/>
<dbReference type="Proteomes" id="UP000006548">
    <property type="component" value="Chromosome 3"/>
</dbReference>
<dbReference type="ExpressionAtlas" id="Q9M224">
    <property type="expression patterns" value="baseline and differential"/>
</dbReference>
<dbReference type="GO" id="GO:0005634">
    <property type="term" value="C:nucleus"/>
    <property type="evidence" value="ECO:0000314"/>
    <property type="project" value="TAIR"/>
</dbReference>
<dbReference type="GO" id="GO:0048527">
    <property type="term" value="P:lateral root development"/>
    <property type="evidence" value="ECO:0000315"/>
    <property type="project" value="TAIR"/>
</dbReference>
<dbReference type="CDD" id="cd22155">
    <property type="entry name" value="F-box_AtADLO1-like"/>
    <property type="match status" value="1"/>
</dbReference>
<dbReference type="FunFam" id="1.25.10.10:FF:001918">
    <property type="entry name" value="Protein ARABIDILLO 2"/>
    <property type="match status" value="1"/>
</dbReference>
<dbReference type="FunFam" id="3.80.10.10:FF:001551">
    <property type="entry name" value="Protein ARABIDILLO 2"/>
    <property type="match status" value="1"/>
</dbReference>
<dbReference type="Gene3D" id="1.25.10.10">
    <property type="entry name" value="Leucine-rich Repeat Variant"/>
    <property type="match status" value="3"/>
</dbReference>
<dbReference type="Gene3D" id="3.80.10.10">
    <property type="entry name" value="Ribonuclease Inhibitor"/>
    <property type="match status" value="1"/>
</dbReference>
<dbReference type="InterPro" id="IPR011989">
    <property type="entry name" value="ARM-like"/>
</dbReference>
<dbReference type="InterPro" id="IPR016024">
    <property type="entry name" value="ARM-type_fold"/>
</dbReference>
<dbReference type="InterPro" id="IPR000225">
    <property type="entry name" value="Armadillo"/>
</dbReference>
<dbReference type="InterPro" id="IPR001810">
    <property type="entry name" value="F-box_dom"/>
</dbReference>
<dbReference type="InterPro" id="IPR006553">
    <property type="entry name" value="Leu-rich_rpt_Cys-con_subtyp"/>
</dbReference>
<dbReference type="InterPro" id="IPR032675">
    <property type="entry name" value="LRR_dom_sf"/>
</dbReference>
<dbReference type="PANTHER" id="PTHR46976">
    <property type="entry name" value="PROTEIN ARABIDILLO 1"/>
    <property type="match status" value="1"/>
</dbReference>
<dbReference type="PANTHER" id="PTHR46976:SF3">
    <property type="entry name" value="PROTEIN ARABIDILLO 2"/>
    <property type="match status" value="1"/>
</dbReference>
<dbReference type="Pfam" id="PF00514">
    <property type="entry name" value="Arm"/>
    <property type="match status" value="6"/>
</dbReference>
<dbReference type="Pfam" id="PF12937">
    <property type="entry name" value="F-box-like"/>
    <property type="match status" value="1"/>
</dbReference>
<dbReference type="SMART" id="SM00185">
    <property type="entry name" value="ARM"/>
    <property type="match status" value="8"/>
</dbReference>
<dbReference type="SMART" id="SM00256">
    <property type="entry name" value="FBOX"/>
    <property type="match status" value="1"/>
</dbReference>
<dbReference type="SMART" id="SM00367">
    <property type="entry name" value="LRR_CC"/>
    <property type="match status" value="2"/>
</dbReference>
<dbReference type="SUPFAM" id="SSF48371">
    <property type="entry name" value="ARM repeat"/>
    <property type="match status" value="2"/>
</dbReference>
<dbReference type="SUPFAM" id="SSF52047">
    <property type="entry name" value="RNI-like"/>
    <property type="match status" value="1"/>
</dbReference>
<dbReference type="PROSITE" id="PS50176">
    <property type="entry name" value="ARM_REPEAT"/>
    <property type="match status" value="6"/>
</dbReference>
<dbReference type="PROSITE" id="PS50181">
    <property type="entry name" value="FBOX"/>
    <property type="match status" value="1"/>
</dbReference>
<gene>
    <name type="ordered locus">At3g60350</name>
    <name type="ORF">T8B10.10</name>
</gene>
<reference key="1">
    <citation type="journal article" date="2000" name="Nature">
        <title>Sequence and analysis of chromosome 3 of the plant Arabidopsis thaliana.</title>
        <authorList>
            <person name="Salanoubat M."/>
            <person name="Lemcke K."/>
            <person name="Rieger M."/>
            <person name="Ansorge W."/>
            <person name="Unseld M."/>
            <person name="Fartmann B."/>
            <person name="Valle G."/>
            <person name="Bloecker H."/>
            <person name="Perez-Alonso M."/>
            <person name="Obermaier B."/>
            <person name="Delseny M."/>
            <person name="Boutry M."/>
            <person name="Grivell L.A."/>
            <person name="Mache R."/>
            <person name="Puigdomenech P."/>
            <person name="De Simone V."/>
            <person name="Choisne N."/>
            <person name="Artiguenave F."/>
            <person name="Robert C."/>
            <person name="Brottier P."/>
            <person name="Wincker P."/>
            <person name="Cattolico L."/>
            <person name="Weissenbach J."/>
            <person name="Saurin W."/>
            <person name="Quetier F."/>
            <person name="Schaefer M."/>
            <person name="Mueller-Auer S."/>
            <person name="Gabel C."/>
            <person name="Fuchs M."/>
            <person name="Benes V."/>
            <person name="Wurmbach E."/>
            <person name="Drzonek H."/>
            <person name="Erfle H."/>
            <person name="Jordan N."/>
            <person name="Bangert S."/>
            <person name="Wiedelmann R."/>
            <person name="Kranz H."/>
            <person name="Voss H."/>
            <person name="Holland R."/>
            <person name="Brandt P."/>
            <person name="Nyakatura G."/>
            <person name="Vezzi A."/>
            <person name="D'Angelo M."/>
            <person name="Pallavicini A."/>
            <person name="Toppo S."/>
            <person name="Simionati B."/>
            <person name="Conrad A."/>
            <person name="Hornischer K."/>
            <person name="Kauer G."/>
            <person name="Loehnert T.-H."/>
            <person name="Nordsiek G."/>
            <person name="Reichelt J."/>
            <person name="Scharfe M."/>
            <person name="Schoen O."/>
            <person name="Bargues M."/>
            <person name="Terol J."/>
            <person name="Climent J."/>
            <person name="Navarro P."/>
            <person name="Collado C."/>
            <person name="Perez-Perez A."/>
            <person name="Ottenwaelder B."/>
            <person name="Duchemin D."/>
            <person name="Cooke R."/>
            <person name="Laudie M."/>
            <person name="Berger-Llauro C."/>
            <person name="Purnelle B."/>
            <person name="Masuy D."/>
            <person name="de Haan M."/>
            <person name="Maarse A.C."/>
            <person name="Alcaraz J.-P."/>
            <person name="Cottet A."/>
            <person name="Casacuberta E."/>
            <person name="Monfort A."/>
            <person name="Argiriou A."/>
            <person name="Flores M."/>
            <person name="Liguori R."/>
            <person name="Vitale D."/>
            <person name="Mannhaupt G."/>
            <person name="Haase D."/>
            <person name="Schoof H."/>
            <person name="Rudd S."/>
            <person name="Zaccaria P."/>
            <person name="Mewes H.-W."/>
            <person name="Mayer K.F.X."/>
            <person name="Kaul S."/>
            <person name="Town C.D."/>
            <person name="Koo H.L."/>
            <person name="Tallon L.J."/>
            <person name="Jenkins J."/>
            <person name="Rooney T."/>
            <person name="Rizzo M."/>
            <person name="Walts A."/>
            <person name="Utterback T."/>
            <person name="Fujii C.Y."/>
            <person name="Shea T.P."/>
            <person name="Creasy T.H."/>
            <person name="Haas B."/>
            <person name="Maiti R."/>
            <person name="Wu D."/>
            <person name="Peterson J."/>
            <person name="Van Aken S."/>
            <person name="Pai G."/>
            <person name="Militscher J."/>
            <person name="Sellers P."/>
            <person name="Gill J.E."/>
            <person name="Feldblyum T.V."/>
            <person name="Preuss D."/>
            <person name="Lin X."/>
            <person name="Nierman W.C."/>
            <person name="Salzberg S.L."/>
            <person name="White O."/>
            <person name="Venter J.C."/>
            <person name="Fraser C.M."/>
            <person name="Kaneko T."/>
            <person name="Nakamura Y."/>
            <person name="Sato S."/>
            <person name="Kato T."/>
            <person name="Asamizu E."/>
            <person name="Sasamoto S."/>
            <person name="Kimura T."/>
            <person name="Idesawa K."/>
            <person name="Kawashima K."/>
            <person name="Kishida Y."/>
            <person name="Kiyokawa C."/>
            <person name="Kohara M."/>
            <person name="Matsumoto M."/>
            <person name="Matsuno A."/>
            <person name="Muraki A."/>
            <person name="Nakayama S."/>
            <person name="Nakazaki N."/>
            <person name="Shinpo S."/>
            <person name="Takeuchi C."/>
            <person name="Wada T."/>
            <person name="Watanabe A."/>
            <person name="Yamada M."/>
            <person name="Yasuda M."/>
            <person name="Tabata S."/>
        </authorList>
    </citation>
    <scope>NUCLEOTIDE SEQUENCE [LARGE SCALE GENOMIC DNA]</scope>
    <source>
        <strain>cv. Columbia</strain>
    </source>
</reference>
<reference key="2">
    <citation type="journal article" date="2017" name="Plant J.">
        <title>Araport11: a complete reannotation of the Arabidopsis thaliana reference genome.</title>
        <authorList>
            <person name="Cheng C.Y."/>
            <person name="Krishnakumar V."/>
            <person name="Chan A.P."/>
            <person name="Thibaud-Nissen F."/>
            <person name="Schobel S."/>
            <person name="Town C.D."/>
        </authorList>
    </citation>
    <scope>GENOME REANNOTATION</scope>
    <source>
        <strain>cv. Columbia</strain>
    </source>
</reference>
<reference key="3">
    <citation type="journal article" date="2006" name="Proc. Natl. Acad. Sci. U.S.A.">
        <title>Armadillo-related proteins promote lateral root development in Arabidopsis.</title>
        <authorList>
            <person name="Coates J.C."/>
            <person name="Laplaze L."/>
            <person name="Haseloff J."/>
        </authorList>
    </citation>
    <scope>FUNCTION</scope>
    <scope>SUBCELLULAR LOCATION</scope>
    <scope>TISSUE SPECIFICITY</scope>
    <scope>DEVELOPMENTAL STAGE</scope>
</reference>
<sequence length="928" mass="100745">MSRRVRQRVEDNGKYKVDSPSYTVIGVEDLAPKVQQYVNWTSLPYDTVFHLFTRLNYRDRASLASTCRTWRSLGASSFLWSSLDLRAHKFDLSMAASLATRCVDLQKIRFRGVDSADAIIHLKARSLLEISGDYCRKITDATLSMIAARHEALESLQLGPDFCERITSDAIRVIAFCCPKLKKLRVSGMRDVSSEAIESLAKHCPQLSDLGFLDCLNINEEALGKVVSLRYLSVAGTSNIKWKVALENWEKLPKLIGLDVSRTTIDHIAVSRLLKSSQSLKVLCALNCPYLEEDKSYSSNRFKGKVLLAVFTDTFDELASIFADNSKKPKNIFSYWRDLIRKDKSIDEIMLWIEWIISHTLLRIAESSNSQGLNDFWLNQGATLLLSLMQSAQEDVQERAATGLATFIVVDDENASIDCGRAEAVMRDGGIRLLLELAKSWREGLQSEAAKAIANLSVNAKVAKAVAEEGGISVLADLAKSMNRLVAEEAAGGLWNLSVGEEHKNAIAQAGGVNALVDLIFRWPHGCDGVLERAAGALANLAADDKCSMEVARAGGVHALVMLARNCKYEGAQEQAARALANLAAHGDSNGNNAAVGQEAGALEALVQLTQSPHEGVKQEAAGALWNLAFDDKNRESIAAFGGVEALVALAKSSSNASTGLQERVAGALWGLSVSEANSIAIGHEGGIPPLIALVRSEAEDVHETAAGALWNLSFNPGNALRIVEEGGVVALVQLCSSSVSKMARFMAALALAYMFDGRMDEYAMIGTSLESTSKSVTLNGARTMALDQIKAFIKTFMEHQIFSTGALSSAPSMLAQVSERARIPEAGHLRCSGSEIGRFVTMLRNPCLVLRACAAFALLQFTIPESRHAMHHASLMQNAGEARGLRSAAAAASMPREAKIFMKIVLRNLEHQQAESPEGMKVSYNRI</sequence>
<accession>Q9M224</accession>
<proteinExistence type="evidence at transcript level"/>
<name>ADLO2_ARATH</name>
<protein>
    <recommendedName>
        <fullName>Protein ARABIDILLO 2</fullName>
    </recommendedName>
</protein>
<evidence type="ECO:0000250" key="1"/>
<evidence type="ECO:0000255" key="2">
    <source>
        <dbReference type="PROSITE-ProRule" id="PRU00080"/>
    </source>
</evidence>
<evidence type="ECO:0000269" key="3">
    <source>
    </source>
</evidence>
<evidence type="ECO:0000305" key="4"/>
<comment type="function">
    <text evidence="3">Promotes lateral root initiation and development, independently of auxin (IAA) and abscisis acid (ABA).</text>
</comment>
<comment type="subcellular location">
    <subcellularLocation>
        <location evidence="3">Nucleus</location>
    </subcellularLocation>
</comment>
<comment type="tissue specificity">
    <text evidence="3">Expressed ubiquitously.</text>
</comment>
<comment type="developmental stage">
    <text evidence="3">Present in lateral root primordia.</text>
</comment>
<comment type="similarity">
    <text evidence="4">Belongs to the beta-catenin family.</text>
</comment>
<keyword id="KW-0539">Nucleus</keyword>
<keyword id="KW-1185">Reference proteome</keyword>
<keyword id="KW-0677">Repeat</keyword>
<keyword id="KW-0833">Ubl conjugation pathway</keyword>
<organism>
    <name type="scientific">Arabidopsis thaliana</name>
    <name type="common">Mouse-ear cress</name>
    <dbReference type="NCBI Taxonomy" id="3702"/>
    <lineage>
        <taxon>Eukaryota</taxon>
        <taxon>Viridiplantae</taxon>
        <taxon>Streptophyta</taxon>
        <taxon>Embryophyta</taxon>
        <taxon>Tracheophyta</taxon>
        <taxon>Spermatophyta</taxon>
        <taxon>Magnoliopsida</taxon>
        <taxon>eudicotyledons</taxon>
        <taxon>Gunneridae</taxon>
        <taxon>Pentapetalae</taxon>
        <taxon>rosids</taxon>
        <taxon>malvids</taxon>
        <taxon>Brassicales</taxon>
        <taxon>Brassicaceae</taxon>
        <taxon>Camelineae</taxon>
        <taxon>Arabidopsis</taxon>
    </lineage>
</organism>
<feature type="chain" id="PRO_0000273538" description="Protein ARABIDILLO 2">
    <location>
        <begin position="1"/>
        <end position="928"/>
    </location>
</feature>
<feature type="domain" description="F-box" evidence="2">
    <location>
        <begin position="37"/>
        <end position="83"/>
    </location>
</feature>
<feature type="repeat" description="ARM 1">
    <location>
        <begin position="147"/>
        <end position="186"/>
    </location>
</feature>
<feature type="repeat" description="ARM 2">
    <location>
        <begin position="237"/>
        <end position="278"/>
    </location>
</feature>
<feature type="repeat" description="ARM 3">
    <location>
        <begin position="303"/>
        <end position="341"/>
    </location>
</feature>
<feature type="repeat" description="ARM 4">
    <location>
        <begin position="370"/>
        <end position="409"/>
    </location>
</feature>
<feature type="repeat" description="ARM 5">
    <location>
        <begin position="419"/>
        <end position="458"/>
    </location>
</feature>
<feature type="repeat" description="ARM 6">
    <location>
        <begin position="460"/>
        <end position="499"/>
    </location>
</feature>
<feature type="repeat" description="ARM 7">
    <location>
        <begin position="501"/>
        <end position="543"/>
    </location>
</feature>
<feature type="repeat" description="ARM 8">
    <location>
        <begin position="545"/>
        <end position="585"/>
    </location>
</feature>
<feature type="repeat" description="ARM 9">
    <location>
        <begin position="591"/>
        <end position="630"/>
    </location>
</feature>
<feature type="repeat" description="ARM 10">
    <location>
        <begin position="632"/>
        <end position="674"/>
    </location>
</feature>
<feature type="repeat" description="ARM 11">
    <location>
        <begin position="676"/>
        <end position="715"/>
    </location>
</feature>
<feature type="repeat" description="ARM 12">
    <location>
        <begin position="717"/>
        <end position="757"/>
    </location>
</feature>
<feature type="repeat" description="ARM 13">
    <location>
        <begin position="824"/>
        <end position="864"/>
    </location>
</feature>
<feature type="short sequence motif" description="Nuclear localization signal" evidence="1">
    <location>
        <begin position="3"/>
        <end position="8"/>
    </location>
</feature>